<keyword id="KW-0002">3D-structure</keyword>
<keyword id="KW-0129">CBS domain</keyword>
<keyword id="KW-1185">Reference proteome</keyword>
<keyword id="KW-0677">Repeat</keyword>
<name>Y1004_METJA</name>
<dbReference type="EMBL" id="L77117">
    <property type="protein sequence ID" value="AAB99008.1"/>
    <property type="molecule type" value="Genomic_DNA"/>
</dbReference>
<dbReference type="PIR" id="C64425">
    <property type="entry name" value="C64425"/>
</dbReference>
<dbReference type="RefSeq" id="WP_010870517.1">
    <property type="nucleotide sequence ID" value="NC_000909.1"/>
</dbReference>
<dbReference type="PDB" id="6H1W">
    <property type="method" value="X-ray"/>
    <property type="resolution" value="2.39 A"/>
    <property type="chains" value="A/B=1-214"/>
</dbReference>
<dbReference type="PDBsum" id="6H1W"/>
<dbReference type="SMR" id="Q58410"/>
<dbReference type="STRING" id="243232.MJ_1004"/>
<dbReference type="PaxDb" id="243232-MJ_1004"/>
<dbReference type="EnsemblBacteria" id="AAB99008">
    <property type="protein sequence ID" value="AAB99008"/>
    <property type="gene ID" value="MJ_1004"/>
</dbReference>
<dbReference type="GeneID" id="1451901"/>
<dbReference type="KEGG" id="mja:MJ_1004"/>
<dbReference type="eggNOG" id="arCOG00628">
    <property type="taxonomic scope" value="Archaea"/>
</dbReference>
<dbReference type="HOGENOM" id="CLU_1286363_0_0_2"/>
<dbReference type="InParanoid" id="Q58410"/>
<dbReference type="OrthoDB" id="43333at2157"/>
<dbReference type="PhylomeDB" id="Q58410"/>
<dbReference type="Proteomes" id="UP000000805">
    <property type="component" value="Chromosome"/>
</dbReference>
<dbReference type="CDD" id="cd02205">
    <property type="entry name" value="CBS_pair_SF"/>
    <property type="match status" value="1"/>
</dbReference>
<dbReference type="Gene3D" id="3.10.580.10">
    <property type="entry name" value="CBS-domain"/>
    <property type="match status" value="2"/>
</dbReference>
<dbReference type="InterPro" id="IPR000644">
    <property type="entry name" value="CBS_dom"/>
</dbReference>
<dbReference type="InterPro" id="IPR046342">
    <property type="entry name" value="CBS_dom_sf"/>
</dbReference>
<dbReference type="InterPro" id="IPR051257">
    <property type="entry name" value="Diverse_CBS-Domain"/>
</dbReference>
<dbReference type="InterPro" id="IPR016486">
    <property type="entry name" value="UCP006591_CBS"/>
</dbReference>
<dbReference type="PANTHER" id="PTHR43080:SF2">
    <property type="entry name" value="CBS DOMAIN-CONTAINING PROTEIN"/>
    <property type="match status" value="1"/>
</dbReference>
<dbReference type="PANTHER" id="PTHR43080">
    <property type="entry name" value="CBS DOMAIN-CONTAINING PROTEIN CBSX3, MITOCHONDRIAL"/>
    <property type="match status" value="1"/>
</dbReference>
<dbReference type="Pfam" id="PF00571">
    <property type="entry name" value="CBS"/>
    <property type="match status" value="2"/>
</dbReference>
<dbReference type="PIRSF" id="PIRSF006591">
    <property type="entry name" value="UCP006591_CBS_MJ1004"/>
    <property type="match status" value="1"/>
</dbReference>
<dbReference type="SMART" id="SM00116">
    <property type="entry name" value="CBS"/>
    <property type="match status" value="2"/>
</dbReference>
<dbReference type="SUPFAM" id="SSF54631">
    <property type="entry name" value="CBS-domain pair"/>
    <property type="match status" value="1"/>
</dbReference>
<dbReference type="PROSITE" id="PS51371">
    <property type="entry name" value="CBS"/>
    <property type="match status" value="2"/>
</dbReference>
<evidence type="ECO:0000255" key="1">
    <source>
        <dbReference type="PROSITE-ProRule" id="PRU00703"/>
    </source>
</evidence>
<evidence type="ECO:0007829" key="2">
    <source>
        <dbReference type="PDB" id="6H1W"/>
    </source>
</evidence>
<organism>
    <name type="scientific">Methanocaldococcus jannaschii (strain ATCC 43067 / DSM 2661 / JAL-1 / JCM 10045 / NBRC 100440)</name>
    <name type="common">Methanococcus jannaschii</name>
    <dbReference type="NCBI Taxonomy" id="243232"/>
    <lineage>
        <taxon>Archaea</taxon>
        <taxon>Methanobacteriati</taxon>
        <taxon>Methanobacteriota</taxon>
        <taxon>Methanomada group</taxon>
        <taxon>Methanococci</taxon>
        <taxon>Methanococcales</taxon>
        <taxon>Methanocaldococcaceae</taxon>
        <taxon>Methanocaldococcus</taxon>
    </lineage>
</organism>
<accession>Q58410</accession>
<feature type="chain" id="PRO_0000107139" description="Uncharacterized protein MJ1004">
    <location>
        <begin position="1"/>
        <end position="214"/>
    </location>
</feature>
<feature type="domain" description="CBS 1" evidence="1">
    <location>
        <begin position="7"/>
        <end position="65"/>
    </location>
</feature>
<feature type="domain" description="CBS 2" evidence="1">
    <location>
        <begin position="69"/>
        <end position="129"/>
    </location>
</feature>
<feature type="helix" evidence="2">
    <location>
        <begin position="3"/>
        <end position="6"/>
    </location>
</feature>
<feature type="helix" evidence="2">
    <location>
        <begin position="20"/>
        <end position="30"/>
    </location>
</feature>
<feature type="strand" evidence="2">
    <location>
        <begin position="33"/>
        <end position="38"/>
    </location>
</feature>
<feature type="strand" evidence="2">
    <location>
        <begin position="42"/>
        <end position="49"/>
    </location>
</feature>
<feature type="helix" evidence="2">
    <location>
        <begin position="50"/>
        <end position="53"/>
    </location>
</feature>
<feature type="helix" evidence="2">
    <location>
        <begin position="59"/>
        <end position="62"/>
    </location>
</feature>
<feature type="helix" evidence="2">
    <location>
        <begin position="65"/>
        <end position="67"/>
    </location>
</feature>
<feature type="helix" evidence="2">
    <location>
        <begin position="72"/>
        <end position="74"/>
    </location>
</feature>
<feature type="helix" evidence="2">
    <location>
        <begin position="84"/>
        <end position="94"/>
    </location>
</feature>
<feature type="strand" evidence="2">
    <location>
        <begin position="99"/>
        <end position="102"/>
    </location>
</feature>
<feature type="strand" evidence="2">
    <location>
        <begin position="106"/>
        <end position="112"/>
    </location>
</feature>
<feature type="helix" evidence="2">
    <location>
        <begin position="114"/>
        <end position="122"/>
    </location>
</feature>
<feature type="helix" evidence="2">
    <location>
        <begin position="123"/>
        <end position="126"/>
    </location>
</feature>
<feature type="helix" evidence="2">
    <location>
        <begin position="129"/>
        <end position="140"/>
    </location>
</feature>
<feature type="helix" evidence="2">
    <location>
        <begin position="145"/>
        <end position="159"/>
    </location>
</feature>
<feature type="helix" evidence="2">
    <location>
        <begin position="166"/>
        <end position="174"/>
    </location>
</feature>
<feature type="strand" evidence="2">
    <location>
        <begin position="175"/>
        <end position="177"/>
    </location>
</feature>
<feature type="helix" evidence="2">
    <location>
        <begin position="178"/>
        <end position="184"/>
    </location>
</feature>
<feature type="helix" evidence="2">
    <location>
        <begin position="188"/>
        <end position="204"/>
    </location>
</feature>
<feature type="helix" evidence="2">
    <location>
        <begin position="206"/>
        <end position="209"/>
    </location>
</feature>
<reference key="1">
    <citation type="journal article" date="1996" name="Science">
        <title>Complete genome sequence of the methanogenic archaeon, Methanococcus jannaschii.</title>
        <authorList>
            <person name="Bult C.J."/>
            <person name="White O."/>
            <person name="Olsen G.J."/>
            <person name="Zhou L."/>
            <person name="Fleischmann R.D."/>
            <person name="Sutton G.G."/>
            <person name="Blake J.A."/>
            <person name="FitzGerald L.M."/>
            <person name="Clayton R.A."/>
            <person name="Gocayne J.D."/>
            <person name="Kerlavage A.R."/>
            <person name="Dougherty B.A."/>
            <person name="Tomb J.-F."/>
            <person name="Adams M.D."/>
            <person name="Reich C.I."/>
            <person name="Overbeek R."/>
            <person name="Kirkness E.F."/>
            <person name="Weinstock K.G."/>
            <person name="Merrick J.M."/>
            <person name="Glodek A."/>
            <person name="Scott J.L."/>
            <person name="Geoghagen N.S.M."/>
            <person name="Weidman J.F."/>
            <person name="Fuhrmann J.L."/>
            <person name="Nguyen D."/>
            <person name="Utterback T.R."/>
            <person name="Kelley J.M."/>
            <person name="Peterson J.D."/>
            <person name="Sadow P.W."/>
            <person name="Hanna M.C."/>
            <person name="Cotton M.D."/>
            <person name="Roberts K.M."/>
            <person name="Hurst M.A."/>
            <person name="Kaine B.P."/>
            <person name="Borodovsky M."/>
            <person name="Klenk H.-P."/>
            <person name="Fraser C.M."/>
            <person name="Smith H.O."/>
            <person name="Woese C.R."/>
            <person name="Venter J.C."/>
        </authorList>
    </citation>
    <scope>NUCLEOTIDE SEQUENCE [LARGE SCALE GENOMIC DNA]</scope>
    <source>
        <strain>ATCC 43067 / DSM 2661 / JAL-1 / JCM 10045 / NBRC 100440</strain>
    </source>
</reference>
<sequence>MKVRDLMDKNFAKIYVDETVEDAINLLKKKKRFSAPIVDKEDRLVGWVTTLELLGISEKDFKKPITEFMRPVEEVITVYEDDEARNVVLKFVKYKVVSIPVLTRDGRVIGMVRNCDVVKTLAKLYEIPVYKIFKELHNHIGDISWEELMEAAAVVTKRMTGEDITPQEYEERIKKTTFGKAIWACGGLEKFFVGLIEIGMVALARKLAKRRKGG</sequence>
<gene>
    <name type="ordered locus">MJ1004</name>
</gene>
<proteinExistence type="evidence at protein level"/>
<protein>
    <recommendedName>
        <fullName>Uncharacterized protein MJ1004</fullName>
    </recommendedName>
</protein>